<organism>
    <name type="scientific">Sphingopyxis alaskensis (strain DSM 13593 / LMG 18877 / RB2256)</name>
    <name type="common">Sphingomonas alaskensis</name>
    <dbReference type="NCBI Taxonomy" id="317655"/>
    <lineage>
        <taxon>Bacteria</taxon>
        <taxon>Pseudomonadati</taxon>
        <taxon>Pseudomonadota</taxon>
        <taxon>Alphaproteobacteria</taxon>
        <taxon>Sphingomonadales</taxon>
        <taxon>Sphingomonadaceae</taxon>
        <taxon>Sphingopyxis</taxon>
    </lineage>
</organism>
<evidence type="ECO:0000255" key="1">
    <source>
        <dbReference type="HAMAP-Rule" id="MF_00161"/>
    </source>
</evidence>
<protein>
    <recommendedName>
        <fullName evidence="1">Lipoprotein signal peptidase</fullName>
        <ecNumber evidence="1">3.4.23.36</ecNumber>
    </recommendedName>
    <alternativeName>
        <fullName evidence="1">Prolipoprotein signal peptidase</fullName>
    </alternativeName>
    <alternativeName>
        <fullName evidence="1">Signal peptidase II</fullName>
        <shortName evidence="1">SPase II</shortName>
    </alternativeName>
</protein>
<name>LSPA_SPHAL</name>
<dbReference type="EC" id="3.4.23.36" evidence="1"/>
<dbReference type="EMBL" id="CP000356">
    <property type="protein sequence ID" value="ABF54065.1"/>
    <property type="molecule type" value="Genomic_DNA"/>
</dbReference>
<dbReference type="RefSeq" id="WP_011542640.1">
    <property type="nucleotide sequence ID" value="NC_008048.1"/>
</dbReference>
<dbReference type="SMR" id="Q1GQK7"/>
<dbReference type="STRING" id="317655.Sala_2356"/>
<dbReference type="KEGG" id="sal:Sala_2356"/>
<dbReference type="eggNOG" id="COG0597">
    <property type="taxonomic scope" value="Bacteria"/>
</dbReference>
<dbReference type="HOGENOM" id="CLU_083252_4_3_5"/>
<dbReference type="OrthoDB" id="9810259at2"/>
<dbReference type="UniPathway" id="UPA00665"/>
<dbReference type="Proteomes" id="UP000006578">
    <property type="component" value="Chromosome"/>
</dbReference>
<dbReference type="GO" id="GO:0005886">
    <property type="term" value="C:plasma membrane"/>
    <property type="evidence" value="ECO:0007669"/>
    <property type="project" value="UniProtKB-SubCell"/>
</dbReference>
<dbReference type="GO" id="GO:0004190">
    <property type="term" value="F:aspartic-type endopeptidase activity"/>
    <property type="evidence" value="ECO:0007669"/>
    <property type="project" value="UniProtKB-UniRule"/>
</dbReference>
<dbReference type="GO" id="GO:0006508">
    <property type="term" value="P:proteolysis"/>
    <property type="evidence" value="ECO:0007669"/>
    <property type="project" value="UniProtKB-KW"/>
</dbReference>
<dbReference type="HAMAP" id="MF_00161">
    <property type="entry name" value="LspA"/>
    <property type="match status" value="1"/>
</dbReference>
<dbReference type="InterPro" id="IPR001872">
    <property type="entry name" value="Peptidase_A8"/>
</dbReference>
<dbReference type="NCBIfam" id="TIGR00077">
    <property type="entry name" value="lspA"/>
    <property type="match status" value="1"/>
</dbReference>
<dbReference type="PANTHER" id="PTHR33695">
    <property type="entry name" value="LIPOPROTEIN SIGNAL PEPTIDASE"/>
    <property type="match status" value="1"/>
</dbReference>
<dbReference type="PANTHER" id="PTHR33695:SF1">
    <property type="entry name" value="LIPOPROTEIN SIGNAL PEPTIDASE"/>
    <property type="match status" value="1"/>
</dbReference>
<dbReference type="Pfam" id="PF01252">
    <property type="entry name" value="Peptidase_A8"/>
    <property type="match status" value="1"/>
</dbReference>
<dbReference type="PRINTS" id="PR00781">
    <property type="entry name" value="LIPOSIGPTASE"/>
</dbReference>
<dbReference type="PROSITE" id="PS00855">
    <property type="entry name" value="SPASE_II"/>
    <property type="match status" value="1"/>
</dbReference>
<gene>
    <name evidence="1" type="primary">lspA</name>
    <name type="ordered locus">Sala_2356</name>
</gene>
<comment type="function">
    <text evidence="1">This protein specifically catalyzes the removal of signal peptides from prolipoproteins.</text>
</comment>
<comment type="catalytic activity">
    <reaction evidence="1">
        <text>Release of signal peptides from bacterial membrane prolipoproteins. Hydrolyzes -Xaa-Yaa-Zaa-|-(S,diacylglyceryl)Cys-, in which Xaa is hydrophobic (preferably Leu), and Yaa (Ala or Ser) and Zaa (Gly or Ala) have small, neutral side chains.</text>
        <dbReference type="EC" id="3.4.23.36"/>
    </reaction>
</comment>
<comment type="pathway">
    <text evidence="1">Protein modification; lipoprotein biosynthesis (signal peptide cleavage).</text>
</comment>
<comment type="subcellular location">
    <subcellularLocation>
        <location evidence="1">Cell inner membrane</location>
        <topology evidence="1">Multi-pass membrane protein</topology>
    </subcellularLocation>
</comment>
<comment type="similarity">
    <text evidence="1">Belongs to the peptidase A8 family.</text>
</comment>
<feature type="chain" id="PRO_0000289430" description="Lipoprotein signal peptidase">
    <location>
        <begin position="1"/>
        <end position="173"/>
    </location>
</feature>
<feature type="transmembrane region" description="Helical" evidence="1">
    <location>
        <begin position="11"/>
        <end position="31"/>
    </location>
</feature>
<feature type="transmembrane region" description="Helical" evidence="1">
    <location>
        <begin position="69"/>
        <end position="89"/>
    </location>
</feature>
<feature type="transmembrane region" description="Helical" evidence="1">
    <location>
        <begin position="93"/>
        <end position="113"/>
    </location>
</feature>
<feature type="transmembrane region" description="Helical" evidence="1">
    <location>
        <begin position="134"/>
        <end position="154"/>
    </location>
</feature>
<feature type="active site" evidence="1">
    <location>
        <position position="123"/>
    </location>
</feature>
<feature type="active site" evidence="1">
    <location>
        <position position="142"/>
    </location>
</feature>
<accession>Q1GQK7</accession>
<proteinExistence type="inferred from homology"/>
<sequence length="173" mass="18660">MSSARSPYLRFGLIFAAVAFLLDQVTKWIVTVPLSLEPKGQIELTSFFNLTWAENCGISLSMFASCTDTTRWTLVAVTGIVAAAVAFWMTREQAKGDVIALALILGGALGNIVDRVRFGYVVDFADLHIGDFRPFMIFNVADACITIGVLLLVARALLLGEKAGQADAKPSVD</sequence>
<reference key="1">
    <citation type="journal article" date="2009" name="Proc. Natl. Acad. Sci. U.S.A.">
        <title>The genomic basis of trophic strategy in marine bacteria.</title>
        <authorList>
            <person name="Lauro F.M."/>
            <person name="McDougald D."/>
            <person name="Thomas T."/>
            <person name="Williams T.J."/>
            <person name="Egan S."/>
            <person name="Rice S."/>
            <person name="DeMaere M.Z."/>
            <person name="Ting L."/>
            <person name="Ertan H."/>
            <person name="Johnson J."/>
            <person name="Ferriera S."/>
            <person name="Lapidus A."/>
            <person name="Anderson I."/>
            <person name="Kyrpides N."/>
            <person name="Munk A.C."/>
            <person name="Detter C."/>
            <person name="Han C.S."/>
            <person name="Brown M.V."/>
            <person name="Robb F.T."/>
            <person name="Kjelleberg S."/>
            <person name="Cavicchioli R."/>
        </authorList>
    </citation>
    <scope>NUCLEOTIDE SEQUENCE [LARGE SCALE GENOMIC DNA]</scope>
    <source>
        <strain>DSM 13593 / LMG 18877 / RB2256</strain>
    </source>
</reference>
<keyword id="KW-0064">Aspartyl protease</keyword>
<keyword id="KW-0997">Cell inner membrane</keyword>
<keyword id="KW-1003">Cell membrane</keyword>
<keyword id="KW-0378">Hydrolase</keyword>
<keyword id="KW-0472">Membrane</keyword>
<keyword id="KW-0645">Protease</keyword>
<keyword id="KW-1185">Reference proteome</keyword>
<keyword id="KW-0812">Transmembrane</keyword>
<keyword id="KW-1133">Transmembrane helix</keyword>